<feature type="chain" id="PRO_1000135300" description="Phosphoribosyl-ATP pyrophosphatase">
    <location>
        <begin position="1"/>
        <end position="107"/>
    </location>
</feature>
<evidence type="ECO:0000255" key="1">
    <source>
        <dbReference type="HAMAP-Rule" id="MF_01020"/>
    </source>
</evidence>
<dbReference type="EC" id="3.6.1.31" evidence="1"/>
<dbReference type="EMBL" id="CP001177">
    <property type="protein sequence ID" value="ACJ77522.1"/>
    <property type="molecule type" value="Genomic_DNA"/>
</dbReference>
<dbReference type="SMR" id="B7HKD6"/>
<dbReference type="KEGG" id="bcr:BCAH187_A1571"/>
<dbReference type="HOGENOM" id="CLU_123337_0_0_9"/>
<dbReference type="UniPathway" id="UPA00031">
    <property type="reaction ID" value="UER00007"/>
</dbReference>
<dbReference type="Proteomes" id="UP000002214">
    <property type="component" value="Chromosome"/>
</dbReference>
<dbReference type="GO" id="GO:0005737">
    <property type="term" value="C:cytoplasm"/>
    <property type="evidence" value="ECO:0007669"/>
    <property type="project" value="UniProtKB-SubCell"/>
</dbReference>
<dbReference type="GO" id="GO:0005524">
    <property type="term" value="F:ATP binding"/>
    <property type="evidence" value="ECO:0007669"/>
    <property type="project" value="UniProtKB-KW"/>
</dbReference>
<dbReference type="GO" id="GO:0004636">
    <property type="term" value="F:phosphoribosyl-ATP diphosphatase activity"/>
    <property type="evidence" value="ECO:0007669"/>
    <property type="project" value="UniProtKB-UniRule"/>
</dbReference>
<dbReference type="GO" id="GO:0000105">
    <property type="term" value="P:L-histidine biosynthetic process"/>
    <property type="evidence" value="ECO:0007669"/>
    <property type="project" value="UniProtKB-UniRule"/>
</dbReference>
<dbReference type="CDD" id="cd11534">
    <property type="entry name" value="NTP-PPase_HisIE_like"/>
    <property type="match status" value="1"/>
</dbReference>
<dbReference type="Gene3D" id="1.10.287.1080">
    <property type="entry name" value="MazG-like"/>
    <property type="match status" value="1"/>
</dbReference>
<dbReference type="HAMAP" id="MF_01020">
    <property type="entry name" value="HisE"/>
    <property type="match status" value="1"/>
</dbReference>
<dbReference type="InterPro" id="IPR008179">
    <property type="entry name" value="HisE"/>
</dbReference>
<dbReference type="InterPro" id="IPR021130">
    <property type="entry name" value="PRib-ATP_PPHydrolase-like"/>
</dbReference>
<dbReference type="NCBIfam" id="TIGR03188">
    <property type="entry name" value="histidine_hisI"/>
    <property type="match status" value="1"/>
</dbReference>
<dbReference type="NCBIfam" id="NF001611">
    <property type="entry name" value="PRK00400.1-3"/>
    <property type="match status" value="1"/>
</dbReference>
<dbReference type="PANTHER" id="PTHR42945">
    <property type="entry name" value="HISTIDINE BIOSYNTHESIS BIFUNCTIONAL PROTEIN"/>
    <property type="match status" value="1"/>
</dbReference>
<dbReference type="PANTHER" id="PTHR42945:SF9">
    <property type="entry name" value="HISTIDINE BIOSYNTHESIS BIFUNCTIONAL PROTEIN HISIE"/>
    <property type="match status" value="1"/>
</dbReference>
<dbReference type="Pfam" id="PF01503">
    <property type="entry name" value="PRA-PH"/>
    <property type="match status" value="1"/>
</dbReference>
<dbReference type="SUPFAM" id="SSF101386">
    <property type="entry name" value="all-alpha NTP pyrophosphatases"/>
    <property type="match status" value="1"/>
</dbReference>
<name>HIS2_BACC7</name>
<accession>B7HKD6</accession>
<keyword id="KW-0028">Amino-acid biosynthesis</keyword>
<keyword id="KW-0067">ATP-binding</keyword>
<keyword id="KW-0963">Cytoplasm</keyword>
<keyword id="KW-0368">Histidine biosynthesis</keyword>
<keyword id="KW-0378">Hydrolase</keyword>
<keyword id="KW-0547">Nucleotide-binding</keyword>
<gene>
    <name evidence="1" type="primary">hisE</name>
    <name type="ordered locus">BCAH187_A1571</name>
</gene>
<comment type="catalytic activity">
    <reaction evidence="1">
        <text>1-(5-phospho-beta-D-ribosyl)-ATP + H2O = 1-(5-phospho-beta-D-ribosyl)-5'-AMP + diphosphate + H(+)</text>
        <dbReference type="Rhea" id="RHEA:22828"/>
        <dbReference type="ChEBI" id="CHEBI:15377"/>
        <dbReference type="ChEBI" id="CHEBI:15378"/>
        <dbReference type="ChEBI" id="CHEBI:33019"/>
        <dbReference type="ChEBI" id="CHEBI:59457"/>
        <dbReference type="ChEBI" id="CHEBI:73183"/>
        <dbReference type="EC" id="3.6.1.31"/>
    </reaction>
</comment>
<comment type="pathway">
    <text evidence="1">Amino-acid biosynthesis; L-histidine biosynthesis; L-histidine from 5-phospho-alpha-D-ribose 1-diphosphate: step 2/9.</text>
</comment>
<comment type="subcellular location">
    <subcellularLocation>
        <location evidence="1">Cytoplasm</location>
    </subcellularLocation>
</comment>
<comment type="similarity">
    <text evidence="1">Belongs to the PRA-PH family.</text>
</comment>
<organism>
    <name type="scientific">Bacillus cereus (strain AH187)</name>
    <dbReference type="NCBI Taxonomy" id="405534"/>
    <lineage>
        <taxon>Bacteria</taxon>
        <taxon>Bacillati</taxon>
        <taxon>Bacillota</taxon>
        <taxon>Bacilli</taxon>
        <taxon>Bacillales</taxon>
        <taxon>Bacillaceae</taxon>
        <taxon>Bacillus</taxon>
        <taxon>Bacillus cereus group</taxon>
    </lineage>
</organism>
<protein>
    <recommendedName>
        <fullName evidence="1">Phosphoribosyl-ATP pyrophosphatase</fullName>
        <shortName evidence="1">PRA-PH</shortName>
        <ecNumber evidence="1">3.6.1.31</ecNumber>
    </recommendedName>
</protein>
<sequence>MKNAFTLLFETIKERKRNPLSESYTNYLFSKGEDKILKKIGEECTEVIIASKNNDNEELVKEMVDVMYHCFVLLAEKNISLEDIMEEVTERNGKLSRVGDRREIDTL</sequence>
<reference key="1">
    <citation type="submission" date="2008-10" db="EMBL/GenBank/DDBJ databases">
        <title>Genome sequence of Bacillus cereus AH187.</title>
        <authorList>
            <person name="Dodson R.J."/>
            <person name="Durkin A.S."/>
            <person name="Rosovitz M.J."/>
            <person name="Rasko D.A."/>
            <person name="Kolsto A.B."/>
            <person name="Okstad O.A."/>
            <person name="Ravel J."/>
            <person name="Sutton G."/>
        </authorList>
    </citation>
    <scope>NUCLEOTIDE SEQUENCE [LARGE SCALE GENOMIC DNA]</scope>
    <source>
        <strain>AH187</strain>
    </source>
</reference>
<proteinExistence type="inferred from homology"/>